<keyword id="KW-0162">Chylomicron</keyword>
<keyword id="KW-0345">HDL</keyword>
<keyword id="KW-0427">LDL</keyword>
<keyword id="KW-0442">Lipid degradation</keyword>
<keyword id="KW-0443">Lipid metabolism</keyword>
<keyword id="KW-0445">Lipid transport</keyword>
<keyword id="KW-0964">Secreted</keyword>
<keyword id="KW-0732">Signal</keyword>
<keyword id="KW-0813">Transport</keyword>
<keyword id="KW-0850">VLDL</keyword>
<organism>
    <name type="scientific">Grammomys surdaster</name>
    <name type="common">African woodland thicket rat</name>
    <name type="synonym">Thamnomys surdaster</name>
    <dbReference type="NCBI Taxonomy" id="491861"/>
    <lineage>
        <taxon>Eukaryota</taxon>
        <taxon>Metazoa</taxon>
        <taxon>Chordata</taxon>
        <taxon>Craniata</taxon>
        <taxon>Vertebrata</taxon>
        <taxon>Euteleostomi</taxon>
        <taxon>Mammalia</taxon>
        <taxon>Eutheria</taxon>
        <taxon>Euarchontoglires</taxon>
        <taxon>Glires</taxon>
        <taxon>Rodentia</taxon>
        <taxon>Myomorpha</taxon>
        <taxon>Muroidea</taxon>
        <taxon>Muridae</taxon>
        <taxon>Murinae</taxon>
        <taxon>Grammomys</taxon>
    </lineage>
</organism>
<name>APOC2_GRASU</name>
<sequence length="97" mass="10765">MGSRFFLALFLVLLVLGNEVQGTQEDDPSSPALLDTMQESFFSYWSSARAAAEGLYQKTYLTSVDEKLRDMYSKSSAAMSTYAGIFTDQLLTLLKGE</sequence>
<protein>
    <recommendedName>
        <fullName>Apolipoprotein C-II</fullName>
        <shortName>Apo-CII</shortName>
        <shortName>ApoC-II</shortName>
    </recommendedName>
    <alternativeName>
        <fullName>Apolipoprotein C2</fullName>
    </alternativeName>
    <component>
        <recommendedName>
            <fullName>Proapolipoprotein C-II</fullName>
            <shortName>ProapoC-II</shortName>
        </recommendedName>
    </component>
</protein>
<dbReference type="EMBL" id="SRMG01000208">
    <property type="status" value="NOT_ANNOTATED_CDS"/>
    <property type="molecule type" value="Genomic_DNA"/>
</dbReference>
<dbReference type="RefSeq" id="XP_028634538.1">
    <property type="nucleotide sequence ID" value="XM_028778705.1"/>
</dbReference>
<dbReference type="SMR" id="P0DUX8"/>
<dbReference type="GeneID" id="114630467"/>
<dbReference type="GO" id="GO:0042627">
    <property type="term" value="C:chylomicron"/>
    <property type="evidence" value="ECO:0007669"/>
    <property type="project" value="UniProtKB-KW"/>
</dbReference>
<dbReference type="GO" id="GO:0034364">
    <property type="term" value="C:high-density lipoprotein particle"/>
    <property type="evidence" value="ECO:0007669"/>
    <property type="project" value="UniProtKB-KW"/>
</dbReference>
<dbReference type="GO" id="GO:0034362">
    <property type="term" value="C:low-density lipoprotein particle"/>
    <property type="evidence" value="ECO:0007669"/>
    <property type="project" value="UniProtKB-KW"/>
</dbReference>
<dbReference type="GO" id="GO:0034361">
    <property type="term" value="C:very-low-density lipoprotein particle"/>
    <property type="evidence" value="ECO:0007669"/>
    <property type="project" value="UniProtKB-KW"/>
</dbReference>
<dbReference type="GO" id="GO:0016004">
    <property type="term" value="F:phospholipase activator activity"/>
    <property type="evidence" value="ECO:0007669"/>
    <property type="project" value="TreeGrafter"/>
</dbReference>
<dbReference type="GO" id="GO:0043274">
    <property type="term" value="F:phospholipase binding"/>
    <property type="evidence" value="ECO:0007669"/>
    <property type="project" value="TreeGrafter"/>
</dbReference>
<dbReference type="GO" id="GO:0016042">
    <property type="term" value="P:lipid catabolic process"/>
    <property type="evidence" value="ECO:0007669"/>
    <property type="project" value="UniProtKB-KW"/>
</dbReference>
<dbReference type="GO" id="GO:0006869">
    <property type="term" value="P:lipid transport"/>
    <property type="evidence" value="ECO:0007669"/>
    <property type="project" value="UniProtKB-KW"/>
</dbReference>
<dbReference type="GO" id="GO:0060697">
    <property type="term" value="P:positive regulation of phospholipid catabolic process"/>
    <property type="evidence" value="ECO:0007669"/>
    <property type="project" value="TreeGrafter"/>
</dbReference>
<dbReference type="FunFam" id="1.10.1440.10:FF:000001">
    <property type="entry name" value="Apolipoprotein C-II"/>
    <property type="match status" value="1"/>
</dbReference>
<dbReference type="Gene3D" id="1.10.1440.10">
    <property type="entry name" value="Apolipoprotein C-II"/>
    <property type="match status" value="1"/>
</dbReference>
<dbReference type="InterPro" id="IPR008019">
    <property type="entry name" value="Apo-CII"/>
</dbReference>
<dbReference type="InterPro" id="IPR023121">
    <property type="entry name" value="ApoC-II_dom_sf"/>
</dbReference>
<dbReference type="PANTHER" id="PTHR16566">
    <property type="entry name" value="APOLIPOPROTEIN C-II"/>
    <property type="match status" value="1"/>
</dbReference>
<dbReference type="PANTHER" id="PTHR16566:SF0">
    <property type="entry name" value="APOLIPOPROTEIN C-II"/>
    <property type="match status" value="1"/>
</dbReference>
<dbReference type="Pfam" id="PF05355">
    <property type="entry name" value="Apo-CII"/>
    <property type="match status" value="1"/>
</dbReference>
<reference key="1">
    <citation type="submission" date="2019-04" db="EMBL/GenBank/DDBJ databases">
        <title>African thicket rat Grammomys surdaster (dolichurus), natural host of rodent malaria parasites, TR1022 genome.</title>
        <authorList>
            <person name="Mullikin J."/>
            <person name="Morrison R."/>
            <person name="Duffy P."/>
        </authorList>
    </citation>
    <scope>NUCLEOTIDE SEQUENCE [LARGE SCALE GENOMIC DNA]</scope>
</reference>
<reference key="2">
    <citation type="unpublished observations" date="2021-07">
        <authorList>
            <person name="Puppione D.L."/>
        </authorList>
    </citation>
    <scope>IDENTIFICATION</scope>
</reference>
<accession>P0DUX8</accession>
<feature type="signal peptide" evidence="2">
    <location>
        <begin position="1"/>
        <end position="22"/>
    </location>
</feature>
<feature type="chain" id="PRO_0000453996" description="Proapolipoprotein C-II">
    <location>
        <begin position="23"/>
        <end position="97"/>
    </location>
</feature>
<feature type="chain" id="PRO_0000453997" description="Apolipoprotein C-II" evidence="1">
    <location>
        <begin position="26"/>
        <end position="97"/>
    </location>
</feature>
<feature type="region of interest" description="Lipid binding" evidence="1">
    <location>
        <begin position="63"/>
        <end position="71"/>
    </location>
</feature>
<feature type="region of interest" description="Lipoprotein lipase cofactor" evidence="1">
    <location>
        <begin position="75"/>
        <end position="97"/>
    </location>
</feature>
<evidence type="ECO:0000250" key="1">
    <source>
        <dbReference type="UniProtKB" id="P02655"/>
    </source>
</evidence>
<evidence type="ECO:0000255" key="2"/>
<evidence type="ECO:0000305" key="3"/>
<proteinExistence type="inferred from homology"/>
<comment type="function">
    <text evidence="1">Component of chylomicrons, very low-density lipoproteins (VLDL), low-density lipoproteins (LDL), and high-density lipoproteins (HDL) in plasma. Plays an important role in lipoprotein metabolism as an activator of lipoprotein lipase.</text>
</comment>
<comment type="subcellular location">
    <subcellularLocation>
        <location evidence="1">Secreted</location>
    </subcellularLocation>
</comment>
<comment type="PTM">
    <text evidence="1">Proapolipoprotein C-II is synthesized as a sialic acid containing glycoprotein which is subsequently desialylated prior to its proteolytic processing.</text>
</comment>
<comment type="PTM">
    <text evidence="1">Proapolipoprotein C-II, the major form found in plasma undergoes proteolytic cleavage of its N-terminal hexapeptide to generate the mature form apolipoprotein C-II, which occurs as the minor form in plasma.</text>
</comment>
<comment type="similarity">
    <text evidence="3">Belongs to the apolipoprotein C2 family.</text>
</comment>
<gene>
    <name type="primary">Apoc2</name>
</gene>